<feature type="chain" id="PRO_1000088336" description="Ribonuclease Z">
    <location>
        <begin position="1"/>
        <end position="314"/>
    </location>
</feature>
<feature type="active site" description="Proton acceptor" evidence="1">
    <location>
        <position position="67"/>
    </location>
</feature>
<feature type="binding site" evidence="1">
    <location>
        <position position="63"/>
    </location>
    <ligand>
        <name>Zn(2+)</name>
        <dbReference type="ChEBI" id="CHEBI:29105"/>
        <label>1</label>
        <note>catalytic</note>
    </ligand>
</feature>
<feature type="binding site" evidence="1">
    <location>
        <position position="65"/>
    </location>
    <ligand>
        <name>Zn(2+)</name>
        <dbReference type="ChEBI" id="CHEBI:29105"/>
        <label>1</label>
        <note>catalytic</note>
    </ligand>
</feature>
<feature type="binding site" evidence="1">
    <location>
        <position position="67"/>
    </location>
    <ligand>
        <name>Zn(2+)</name>
        <dbReference type="ChEBI" id="CHEBI:29105"/>
        <label>2</label>
        <note>catalytic</note>
    </ligand>
</feature>
<feature type="binding site" evidence="1">
    <location>
        <position position="68"/>
    </location>
    <ligand>
        <name>Zn(2+)</name>
        <dbReference type="ChEBI" id="CHEBI:29105"/>
        <label>2</label>
        <note>catalytic</note>
    </ligand>
</feature>
<feature type="binding site" evidence="1">
    <location>
        <position position="142"/>
    </location>
    <ligand>
        <name>Zn(2+)</name>
        <dbReference type="ChEBI" id="CHEBI:29105"/>
        <label>1</label>
        <note>catalytic</note>
    </ligand>
</feature>
<feature type="binding site" evidence="1">
    <location>
        <position position="205"/>
    </location>
    <ligand>
        <name>Zn(2+)</name>
        <dbReference type="ChEBI" id="CHEBI:29105"/>
        <label>1</label>
        <note>catalytic</note>
    </ligand>
</feature>
<feature type="binding site" evidence="1">
    <location>
        <position position="205"/>
    </location>
    <ligand>
        <name>Zn(2+)</name>
        <dbReference type="ChEBI" id="CHEBI:29105"/>
        <label>2</label>
        <note>catalytic</note>
    </ligand>
</feature>
<feature type="binding site" evidence="1">
    <location>
        <position position="263"/>
    </location>
    <ligand>
        <name>Zn(2+)</name>
        <dbReference type="ChEBI" id="CHEBI:29105"/>
        <label>2</label>
        <note>catalytic</note>
    </ligand>
</feature>
<organism>
    <name type="scientific">Kineococcus radiotolerans (strain ATCC BAA-149 / DSM 14245 / SRS30216)</name>
    <dbReference type="NCBI Taxonomy" id="266940"/>
    <lineage>
        <taxon>Bacteria</taxon>
        <taxon>Bacillati</taxon>
        <taxon>Actinomycetota</taxon>
        <taxon>Actinomycetes</taxon>
        <taxon>Kineosporiales</taxon>
        <taxon>Kineosporiaceae</taxon>
        <taxon>Kineococcus</taxon>
    </lineage>
</organism>
<sequence>MSPRELVVLGTAGQAPTRTRNHNGYLLRWDGTSVLFDPGEGTQRQMLHAEVSAPRIERICVTHRHNDHCLGVPGVLNRMAQDGPGRPVTLHGPDDAFEHLRALAVVAAAHVEVTVEGIPVRDEPVEVARVAGARLSARALDHRVPTVGYRLEEPAGRSFDAAALADAGITGPDVGELQRRGELRGVRLADVSVERPGQVFGFVMDTRDHPAVVDLVRDADLAVLECTYSERHADLARDRGHLTARQAGRAAARAGVRTLVLAHFSQRYPDLEELAAEARAAVAELGGRTRVHLAHDLDVVPVPPRRSAPARAAS</sequence>
<reference key="1">
    <citation type="journal article" date="2008" name="PLoS ONE">
        <title>Survival in nuclear waste, extreme resistance, and potential applications gleaned from the genome sequence of Kineococcus radiotolerans SRS30216.</title>
        <authorList>
            <person name="Bagwell C.E."/>
            <person name="Bhat S."/>
            <person name="Hawkins G.M."/>
            <person name="Smith B.W."/>
            <person name="Biswas T."/>
            <person name="Hoover T.R."/>
            <person name="Saunders E."/>
            <person name="Han C.S."/>
            <person name="Tsodikov O.V."/>
            <person name="Shimkets L.J."/>
        </authorList>
    </citation>
    <scope>NUCLEOTIDE SEQUENCE [LARGE SCALE GENOMIC DNA]</scope>
    <source>
        <strain>ATCC BAA-149 / DSM 14245 / SRS30216</strain>
    </source>
</reference>
<dbReference type="EC" id="3.1.26.11" evidence="1"/>
<dbReference type="EMBL" id="CP000750">
    <property type="protein sequence ID" value="ABS05683.1"/>
    <property type="molecule type" value="Genomic_DNA"/>
</dbReference>
<dbReference type="RefSeq" id="WP_012086023.1">
    <property type="nucleotide sequence ID" value="NC_009664.2"/>
</dbReference>
<dbReference type="SMR" id="A6WFU4"/>
<dbReference type="STRING" id="266940.Krad_4220"/>
<dbReference type="KEGG" id="kra:Krad_4220"/>
<dbReference type="eggNOG" id="COG1234">
    <property type="taxonomic scope" value="Bacteria"/>
</dbReference>
<dbReference type="HOGENOM" id="CLU_031317_2_1_11"/>
<dbReference type="OrthoDB" id="9800940at2"/>
<dbReference type="Proteomes" id="UP000001116">
    <property type="component" value="Chromosome"/>
</dbReference>
<dbReference type="GO" id="GO:0042781">
    <property type="term" value="F:3'-tRNA processing endoribonuclease activity"/>
    <property type="evidence" value="ECO:0007669"/>
    <property type="project" value="UniProtKB-UniRule"/>
</dbReference>
<dbReference type="GO" id="GO:0008270">
    <property type="term" value="F:zinc ion binding"/>
    <property type="evidence" value="ECO:0007669"/>
    <property type="project" value="UniProtKB-UniRule"/>
</dbReference>
<dbReference type="CDD" id="cd07717">
    <property type="entry name" value="RNaseZ_ZiPD-like_MBL-fold"/>
    <property type="match status" value="1"/>
</dbReference>
<dbReference type="Gene3D" id="3.60.15.10">
    <property type="entry name" value="Ribonuclease Z/Hydroxyacylglutathione hydrolase-like"/>
    <property type="match status" value="1"/>
</dbReference>
<dbReference type="HAMAP" id="MF_01818">
    <property type="entry name" value="RNase_Z_BN"/>
    <property type="match status" value="1"/>
</dbReference>
<dbReference type="InterPro" id="IPR001279">
    <property type="entry name" value="Metallo-B-lactamas"/>
</dbReference>
<dbReference type="InterPro" id="IPR036866">
    <property type="entry name" value="RibonucZ/Hydroxyglut_hydro"/>
</dbReference>
<dbReference type="InterPro" id="IPR013471">
    <property type="entry name" value="RNase_Z/BN"/>
</dbReference>
<dbReference type="PANTHER" id="PTHR46018">
    <property type="entry name" value="ZINC PHOSPHODIESTERASE ELAC PROTEIN 1"/>
    <property type="match status" value="1"/>
</dbReference>
<dbReference type="PANTHER" id="PTHR46018:SF2">
    <property type="entry name" value="ZINC PHOSPHODIESTERASE ELAC PROTEIN 1"/>
    <property type="match status" value="1"/>
</dbReference>
<dbReference type="Pfam" id="PF12706">
    <property type="entry name" value="Lactamase_B_2"/>
    <property type="match status" value="1"/>
</dbReference>
<dbReference type="SUPFAM" id="SSF56281">
    <property type="entry name" value="Metallo-hydrolase/oxidoreductase"/>
    <property type="match status" value="1"/>
</dbReference>
<evidence type="ECO:0000255" key="1">
    <source>
        <dbReference type="HAMAP-Rule" id="MF_01818"/>
    </source>
</evidence>
<protein>
    <recommendedName>
        <fullName evidence="1">Ribonuclease Z</fullName>
        <shortName evidence="1">RNase Z</shortName>
        <ecNumber evidence="1">3.1.26.11</ecNumber>
    </recommendedName>
    <alternativeName>
        <fullName evidence="1">tRNA 3 endonuclease</fullName>
    </alternativeName>
    <alternativeName>
        <fullName evidence="1">tRNase Z</fullName>
    </alternativeName>
</protein>
<accession>A6WFU4</accession>
<name>RNZ_KINRD</name>
<proteinExistence type="inferred from homology"/>
<keyword id="KW-0255">Endonuclease</keyword>
<keyword id="KW-0378">Hydrolase</keyword>
<keyword id="KW-0479">Metal-binding</keyword>
<keyword id="KW-0540">Nuclease</keyword>
<keyword id="KW-1185">Reference proteome</keyword>
<keyword id="KW-0819">tRNA processing</keyword>
<keyword id="KW-0862">Zinc</keyword>
<gene>
    <name evidence="1" type="primary">rnz</name>
    <name type="ordered locus">Krad_4220</name>
</gene>
<comment type="function">
    <text evidence="1">Zinc phosphodiesterase, which displays some tRNA 3'-processing endonuclease activity. Probably involved in tRNA maturation, by removing a 3'-trailer from precursor tRNA.</text>
</comment>
<comment type="catalytic activity">
    <reaction evidence="1">
        <text>Endonucleolytic cleavage of RNA, removing extra 3' nucleotides from tRNA precursor, generating 3' termini of tRNAs. A 3'-hydroxy group is left at the tRNA terminus and a 5'-phosphoryl group is left at the trailer molecule.</text>
        <dbReference type="EC" id="3.1.26.11"/>
    </reaction>
</comment>
<comment type="cofactor">
    <cofactor evidence="1">
        <name>Zn(2+)</name>
        <dbReference type="ChEBI" id="CHEBI:29105"/>
    </cofactor>
    <text evidence="1">Binds 2 Zn(2+) ions.</text>
</comment>
<comment type="subunit">
    <text evidence="1">Homodimer.</text>
</comment>
<comment type="similarity">
    <text evidence="1">Belongs to the RNase Z family.</text>
</comment>